<protein>
    <recommendedName>
        <fullName>F-box protein At3g55900</fullName>
    </recommendedName>
</protein>
<gene>
    <name type="ordered locus">At3g55900</name>
    <name type="ORF">F27K19.80</name>
</gene>
<comment type="sequence caution" evidence="2">
    <conflict type="erroneous gene model prediction">
        <sequence resource="EMBL-CDS" id="AEE79455"/>
    </conflict>
</comment>
<comment type="sequence caution" evidence="2">
    <conflict type="erroneous gene model prediction">
        <sequence resource="EMBL-CDS" id="CAB87844"/>
    </conflict>
</comment>
<reference key="1">
    <citation type="journal article" date="2000" name="Nature">
        <title>Sequence and analysis of chromosome 3 of the plant Arabidopsis thaliana.</title>
        <authorList>
            <person name="Salanoubat M."/>
            <person name="Lemcke K."/>
            <person name="Rieger M."/>
            <person name="Ansorge W."/>
            <person name="Unseld M."/>
            <person name="Fartmann B."/>
            <person name="Valle G."/>
            <person name="Bloecker H."/>
            <person name="Perez-Alonso M."/>
            <person name="Obermaier B."/>
            <person name="Delseny M."/>
            <person name="Boutry M."/>
            <person name="Grivell L.A."/>
            <person name="Mache R."/>
            <person name="Puigdomenech P."/>
            <person name="De Simone V."/>
            <person name="Choisne N."/>
            <person name="Artiguenave F."/>
            <person name="Robert C."/>
            <person name="Brottier P."/>
            <person name="Wincker P."/>
            <person name="Cattolico L."/>
            <person name="Weissenbach J."/>
            <person name="Saurin W."/>
            <person name="Quetier F."/>
            <person name="Schaefer M."/>
            <person name="Mueller-Auer S."/>
            <person name="Gabel C."/>
            <person name="Fuchs M."/>
            <person name="Benes V."/>
            <person name="Wurmbach E."/>
            <person name="Drzonek H."/>
            <person name="Erfle H."/>
            <person name="Jordan N."/>
            <person name="Bangert S."/>
            <person name="Wiedelmann R."/>
            <person name="Kranz H."/>
            <person name="Voss H."/>
            <person name="Holland R."/>
            <person name="Brandt P."/>
            <person name="Nyakatura G."/>
            <person name="Vezzi A."/>
            <person name="D'Angelo M."/>
            <person name="Pallavicini A."/>
            <person name="Toppo S."/>
            <person name="Simionati B."/>
            <person name="Conrad A."/>
            <person name="Hornischer K."/>
            <person name="Kauer G."/>
            <person name="Loehnert T.-H."/>
            <person name="Nordsiek G."/>
            <person name="Reichelt J."/>
            <person name="Scharfe M."/>
            <person name="Schoen O."/>
            <person name="Bargues M."/>
            <person name="Terol J."/>
            <person name="Climent J."/>
            <person name="Navarro P."/>
            <person name="Collado C."/>
            <person name="Perez-Perez A."/>
            <person name="Ottenwaelder B."/>
            <person name="Duchemin D."/>
            <person name="Cooke R."/>
            <person name="Laudie M."/>
            <person name="Berger-Llauro C."/>
            <person name="Purnelle B."/>
            <person name="Masuy D."/>
            <person name="de Haan M."/>
            <person name="Maarse A.C."/>
            <person name="Alcaraz J.-P."/>
            <person name="Cottet A."/>
            <person name="Casacuberta E."/>
            <person name="Monfort A."/>
            <person name="Argiriou A."/>
            <person name="Flores M."/>
            <person name="Liguori R."/>
            <person name="Vitale D."/>
            <person name="Mannhaupt G."/>
            <person name="Haase D."/>
            <person name="Schoof H."/>
            <person name="Rudd S."/>
            <person name="Zaccaria P."/>
            <person name="Mewes H.-W."/>
            <person name="Mayer K.F.X."/>
            <person name="Kaul S."/>
            <person name="Town C.D."/>
            <person name="Koo H.L."/>
            <person name="Tallon L.J."/>
            <person name="Jenkins J."/>
            <person name="Rooney T."/>
            <person name="Rizzo M."/>
            <person name="Walts A."/>
            <person name="Utterback T."/>
            <person name="Fujii C.Y."/>
            <person name="Shea T.P."/>
            <person name="Creasy T.H."/>
            <person name="Haas B."/>
            <person name="Maiti R."/>
            <person name="Wu D."/>
            <person name="Peterson J."/>
            <person name="Van Aken S."/>
            <person name="Pai G."/>
            <person name="Militscher J."/>
            <person name="Sellers P."/>
            <person name="Gill J.E."/>
            <person name="Feldblyum T.V."/>
            <person name="Preuss D."/>
            <person name="Lin X."/>
            <person name="Nierman W.C."/>
            <person name="Salzberg S.L."/>
            <person name="White O."/>
            <person name="Venter J.C."/>
            <person name="Fraser C.M."/>
            <person name="Kaneko T."/>
            <person name="Nakamura Y."/>
            <person name="Sato S."/>
            <person name="Kato T."/>
            <person name="Asamizu E."/>
            <person name="Sasamoto S."/>
            <person name="Kimura T."/>
            <person name="Idesawa K."/>
            <person name="Kawashima K."/>
            <person name="Kishida Y."/>
            <person name="Kiyokawa C."/>
            <person name="Kohara M."/>
            <person name="Matsumoto M."/>
            <person name="Matsuno A."/>
            <person name="Muraki A."/>
            <person name="Nakayama S."/>
            <person name="Nakazaki N."/>
            <person name="Shinpo S."/>
            <person name="Takeuchi C."/>
            <person name="Wada T."/>
            <person name="Watanabe A."/>
            <person name="Yamada M."/>
            <person name="Yasuda M."/>
            <person name="Tabata S."/>
        </authorList>
    </citation>
    <scope>NUCLEOTIDE SEQUENCE [LARGE SCALE GENOMIC DNA]</scope>
    <source>
        <strain>cv. Columbia</strain>
    </source>
</reference>
<reference key="2">
    <citation type="journal article" date="2017" name="Plant J.">
        <title>Araport11: a complete reannotation of the Arabidopsis thaliana reference genome.</title>
        <authorList>
            <person name="Cheng C.Y."/>
            <person name="Krishnakumar V."/>
            <person name="Chan A.P."/>
            <person name="Thibaud-Nissen F."/>
            <person name="Schobel S."/>
            <person name="Town C.D."/>
        </authorList>
    </citation>
    <scope>GENOME REANNOTATION</scope>
    <source>
        <strain>cv. Columbia</strain>
    </source>
</reference>
<reference key="3">
    <citation type="submission" date="2004-09" db="EMBL/GenBank/DDBJ databases">
        <title>Arabidopsis ORF clones.</title>
        <authorList>
            <person name="Cheuk R.F."/>
            <person name="Chen H."/>
            <person name="Kim C.J."/>
            <person name="Shinn P."/>
            <person name="Ecker J.R."/>
        </authorList>
    </citation>
    <scope>NUCLEOTIDE SEQUENCE [LARGE SCALE MRNA]</scope>
    <source>
        <strain>cv. Columbia</strain>
    </source>
</reference>
<proteinExistence type="evidence at transcript level"/>
<dbReference type="EMBL" id="AL163832">
    <property type="protein sequence ID" value="CAB87844.1"/>
    <property type="status" value="ALT_SEQ"/>
    <property type="molecule type" value="Genomic_DNA"/>
</dbReference>
<dbReference type="EMBL" id="CP002686">
    <property type="protein sequence ID" value="AEE79455.1"/>
    <property type="status" value="ALT_SEQ"/>
    <property type="molecule type" value="Genomic_DNA"/>
</dbReference>
<dbReference type="EMBL" id="BT015134">
    <property type="protein sequence ID" value="AAT85730.1"/>
    <property type="molecule type" value="mRNA"/>
</dbReference>
<dbReference type="EMBL" id="BT015645">
    <property type="protein sequence ID" value="AAU15144.1"/>
    <property type="molecule type" value="mRNA"/>
</dbReference>
<dbReference type="PIR" id="T49202">
    <property type="entry name" value="T49202"/>
</dbReference>
<dbReference type="RefSeq" id="NP_191149.1">
    <property type="nucleotide sequence ID" value="NM_115448.2"/>
</dbReference>
<dbReference type="SMR" id="Q6AWW4"/>
<dbReference type="PaxDb" id="3702-AT3G55900.1"/>
<dbReference type="GeneID" id="824756"/>
<dbReference type="KEGG" id="ath:AT3G55900"/>
<dbReference type="Araport" id="AT3G55900"/>
<dbReference type="TAIR" id="AT3G55900"/>
<dbReference type="InParanoid" id="Q6AWW4"/>
<dbReference type="OrthoDB" id="613853at2759"/>
<dbReference type="PRO" id="PR:Q6AWW4"/>
<dbReference type="Proteomes" id="UP000006548">
    <property type="component" value="Chromosome 3"/>
</dbReference>
<dbReference type="ExpressionAtlas" id="Q6AWW4">
    <property type="expression patterns" value="baseline and differential"/>
</dbReference>
<dbReference type="InterPro" id="IPR036047">
    <property type="entry name" value="F-box-like_dom_sf"/>
</dbReference>
<dbReference type="InterPro" id="IPR001810">
    <property type="entry name" value="F-box_dom"/>
</dbReference>
<dbReference type="Pfam" id="PF00646">
    <property type="entry name" value="F-box"/>
    <property type="match status" value="1"/>
</dbReference>
<dbReference type="SUPFAM" id="SSF81383">
    <property type="entry name" value="F-box domain"/>
    <property type="match status" value="1"/>
</dbReference>
<dbReference type="PROSITE" id="PS50181">
    <property type="entry name" value="FBOX"/>
    <property type="match status" value="1"/>
</dbReference>
<sequence length="148" mass="17428">MKIAVKKSCRNLSELPQELLYKILGLLPTRNVVSTSLISHQRRSQFHWMERLKFRYPRLLLDNRVPDAENEAENLVPGPSRCYHEDPKSCIIQEQIFLPYTSGSFHVQTRISSQRLIHNQHRKCQLRCVVQLSSFCLLSLQQIRLQRC</sequence>
<organism>
    <name type="scientific">Arabidopsis thaliana</name>
    <name type="common">Mouse-ear cress</name>
    <dbReference type="NCBI Taxonomy" id="3702"/>
    <lineage>
        <taxon>Eukaryota</taxon>
        <taxon>Viridiplantae</taxon>
        <taxon>Streptophyta</taxon>
        <taxon>Embryophyta</taxon>
        <taxon>Tracheophyta</taxon>
        <taxon>Spermatophyta</taxon>
        <taxon>Magnoliopsida</taxon>
        <taxon>eudicotyledons</taxon>
        <taxon>Gunneridae</taxon>
        <taxon>Pentapetalae</taxon>
        <taxon>rosids</taxon>
        <taxon>malvids</taxon>
        <taxon>Brassicales</taxon>
        <taxon>Brassicaceae</taxon>
        <taxon>Camelineae</taxon>
        <taxon>Arabidopsis</taxon>
    </lineage>
</organism>
<evidence type="ECO:0000255" key="1">
    <source>
        <dbReference type="PROSITE-ProRule" id="PRU00080"/>
    </source>
</evidence>
<evidence type="ECO:0000305" key="2"/>
<keyword id="KW-1185">Reference proteome</keyword>
<feature type="chain" id="PRO_0000283473" description="F-box protein At3g55900">
    <location>
        <begin position="1"/>
        <end position="148"/>
    </location>
</feature>
<feature type="domain" description="F-box" evidence="1">
    <location>
        <begin position="9"/>
        <end position="59"/>
    </location>
</feature>
<name>FB203_ARATH</name>
<accession>Q6AWW4</accession>
<accession>F4IY48</accession>
<accession>Q9LY55</accession>